<sequence length="689" mass="80746">MGKNFLLEIGTEEMPAHFLDPAIKQIYDFSLNYFENQKISFEDIKTWATPRRLVVYIKNLSEKQESQEEEIRGPAAHVGYKNGVWTEVAKRFAEQYGASLEALYIKETPRGKYIFLKRIKEGVNTLEILPDYAVSLLKNIRFPKMMKWGNVDFYFGRPIRWIVALYGSEEVKFEVAGVKSSRYSRPPRFLPQTPIEIKDADSYIDLMKENYVIVDQNERKNEILRHIKEIANSNSLTLSYDEDLLEEVTYLVEYPTALLGQFDSKYLTLPEIVLIVTMEKKQRYFPLRDKEGNLINKFIVIRNGTENYKEVVIQGNEKVLKARLADAEYYYNEDIRCPLEKYSEKLSGIIFQEQLGTIKDKVERVRILVREIANILELSTEEKEILERAVDLYKADLGTLMVSEYPELHGIMGSIYAKISGEREPIPQIIGEYIYPRTLEDQIPKNPLSTVLGIADRVDSLTGYFALDLFPTGSEDPIGLRRISGGLLRLLLETDFKLNLRNLFMKSFEVYKFSDKCPISQIEKGMLFIGQRLRNLLLDKYPNDIVEAVMEVGYDELWKLKRRVDFIREFKEKDPYEKLKRALNRLYRILPKDFSPKEINENLFNSPFEKELYRDYVKINKEISKEILKGNYKVLLGYDFLKEFSDHIESFFDHVLVMSPNEEEKLNRLSLLFAIKSLFWEVLDWSKLN</sequence>
<gene>
    <name evidence="1" type="primary">glyS</name>
    <name type="ordered locus">Dtur_1319</name>
</gene>
<protein>
    <recommendedName>
        <fullName evidence="1">Glycine--tRNA ligase beta subunit</fullName>
        <ecNumber evidence="1">6.1.1.14</ecNumber>
    </recommendedName>
    <alternativeName>
        <fullName evidence="1">Glycyl-tRNA synthetase beta subunit</fullName>
        <shortName evidence="1">GlyRS</shortName>
    </alternativeName>
</protein>
<proteinExistence type="inferred from homology"/>
<accession>B8E0E8</accession>
<dbReference type="EC" id="6.1.1.14" evidence="1"/>
<dbReference type="EMBL" id="CP001251">
    <property type="protein sequence ID" value="ACK42593.1"/>
    <property type="molecule type" value="Genomic_DNA"/>
</dbReference>
<dbReference type="RefSeq" id="WP_012583675.1">
    <property type="nucleotide sequence ID" value="NC_011661.1"/>
</dbReference>
<dbReference type="RefSeq" id="YP_002353207.1">
    <property type="nucleotide sequence ID" value="NC_011661.1"/>
</dbReference>
<dbReference type="SMR" id="B8E0E8"/>
<dbReference type="FunCoup" id="B8E0E8">
    <property type="interactions" value="335"/>
</dbReference>
<dbReference type="STRING" id="515635.Dtur_1319"/>
<dbReference type="EnsemblBacteria" id="ACK42593">
    <property type="protein sequence ID" value="ACK42593"/>
    <property type="gene ID" value="Dtur_1319"/>
</dbReference>
<dbReference type="KEGG" id="dtu:Dtur_1319"/>
<dbReference type="PATRIC" id="fig|515635.4.peg.1364"/>
<dbReference type="eggNOG" id="COG0751">
    <property type="taxonomic scope" value="Bacteria"/>
</dbReference>
<dbReference type="HOGENOM" id="CLU_007220_2_2_0"/>
<dbReference type="InParanoid" id="B8E0E8"/>
<dbReference type="OrthoDB" id="9775440at2"/>
<dbReference type="Proteomes" id="UP000007719">
    <property type="component" value="Chromosome"/>
</dbReference>
<dbReference type="GO" id="GO:0005829">
    <property type="term" value="C:cytosol"/>
    <property type="evidence" value="ECO:0000318"/>
    <property type="project" value="GO_Central"/>
</dbReference>
<dbReference type="GO" id="GO:0004814">
    <property type="term" value="F:arginine-tRNA ligase activity"/>
    <property type="evidence" value="ECO:0007669"/>
    <property type="project" value="InterPro"/>
</dbReference>
<dbReference type="GO" id="GO:0005524">
    <property type="term" value="F:ATP binding"/>
    <property type="evidence" value="ECO:0007669"/>
    <property type="project" value="UniProtKB-UniRule"/>
</dbReference>
<dbReference type="GO" id="GO:0004820">
    <property type="term" value="F:glycine-tRNA ligase activity"/>
    <property type="evidence" value="ECO:0007669"/>
    <property type="project" value="UniProtKB-UniRule"/>
</dbReference>
<dbReference type="GO" id="GO:0006420">
    <property type="term" value="P:arginyl-tRNA aminoacylation"/>
    <property type="evidence" value="ECO:0007669"/>
    <property type="project" value="InterPro"/>
</dbReference>
<dbReference type="GO" id="GO:0006426">
    <property type="term" value="P:glycyl-tRNA aminoacylation"/>
    <property type="evidence" value="ECO:0007669"/>
    <property type="project" value="UniProtKB-UniRule"/>
</dbReference>
<dbReference type="HAMAP" id="MF_00255">
    <property type="entry name" value="Gly_tRNA_synth_beta"/>
    <property type="match status" value="1"/>
</dbReference>
<dbReference type="InterPro" id="IPR008909">
    <property type="entry name" value="DALR_anticod-bd"/>
</dbReference>
<dbReference type="InterPro" id="IPR015944">
    <property type="entry name" value="Gly-tRNA-synth_bsu"/>
</dbReference>
<dbReference type="InterPro" id="IPR006194">
    <property type="entry name" value="Gly-tRNA-synth_heterodimer"/>
</dbReference>
<dbReference type="NCBIfam" id="TIGR00211">
    <property type="entry name" value="glyS"/>
    <property type="match status" value="1"/>
</dbReference>
<dbReference type="PANTHER" id="PTHR30075:SF2">
    <property type="entry name" value="GLYCINE--TRNA LIGASE, CHLOROPLASTIC_MITOCHONDRIAL 2"/>
    <property type="match status" value="1"/>
</dbReference>
<dbReference type="PANTHER" id="PTHR30075">
    <property type="entry name" value="GLYCYL-TRNA SYNTHETASE"/>
    <property type="match status" value="1"/>
</dbReference>
<dbReference type="Pfam" id="PF05746">
    <property type="entry name" value="DALR_1"/>
    <property type="match status" value="1"/>
</dbReference>
<dbReference type="Pfam" id="PF02092">
    <property type="entry name" value="tRNA_synt_2f"/>
    <property type="match status" value="1"/>
</dbReference>
<dbReference type="PRINTS" id="PR01045">
    <property type="entry name" value="TRNASYNTHGB"/>
</dbReference>
<dbReference type="SUPFAM" id="SSF109604">
    <property type="entry name" value="HD-domain/PDEase-like"/>
    <property type="match status" value="1"/>
</dbReference>
<dbReference type="PROSITE" id="PS50861">
    <property type="entry name" value="AA_TRNA_LIGASE_II_GLYAB"/>
    <property type="match status" value="1"/>
</dbReference>
<organism>
    <name type="scientific">Dictyoglomus turgidum (strain DSM 6724 / Z-1310)</name>
    <dbReference type="NCBI Taxonomy" id="515635"/>
    <lineage>
        <taxon>Bacteria</taxon>
        <taxon>Pseudomonadati</taxon>
        <taxon>Dictyoglomota</taxon>
        <taxon>Dictyoglomia</taxon>
        <taxon>Dictyoglomales</taxon>
        <taxon>Dictyoglomaceae</taxon>
        <taxon>Dictyoglomus</taxon>
    </lineage>
</organism>
<comment type="catalytic activity">
    <reaction evidence="1">
        <text>tRNA(Gly) + glycine + ATP = glycyl-tRNA(Gly) + AMP + diphosphate</text>
        <dbReference type="Rhea" id="RHEA:16013"/>
        <dbReference type="Rhea" id="RHEA-COMP:9664"/>
        <dbReference type="Rhea" id="RHEA-COMP:9683"/>
        <dbReference type="ChEBI" id="CHEBI:30616"/>
        <dbReference type="ChEBI" id="CHEBI:33019"/>
        <dbReference type="ChEBI" id="CHEBI:57305"/>
        <dbReference type="ChEBI" id="CHEBI:78442"/>
        <dbReference type="ChEBI" id="CHEBI:78522"/>
        <dbReference type="ChEBI" id="CHEBI:456215"/>
        <dbReference type="EC" id="6.1.1.14"/>
    </reaction>
</comment>
<comment type="subunit">
    <text evidence="1">Tetramer of two alpha and two beta subunits.</text>
</comment>
<comment type="subcellular location">
    <subcellularLocation>
        <location evidence="1">Cytoplasm</location>
    </subcellularLocation>
</comment>
<comment type="similarity">
    <text evidence="1">Belongs to the class-II aminoacyl-tRNA synthetase family.</text>
</comment>
<keyword id="KW-0030">Aminoacyl-tRNA synthetase</keyword>
<keyword id="KW-0067">ATP-binding</keyword>
<keyword id="KW-0963">Cytoplasm</keyword>
<keyword id="KW-0436">Ligase</keyword>
<keyword id="KW-0547">Nucleotide-binding</keyword>
<keyword id="KW-0648">Protein biosynthesis</keyword>
<keyword id="KW-1185">Reference proteome</keyword>
<name>SYGB_DICTD</name>
<feature type="chain" id="PRO_1000197185" description="Glycine--tRNA ligase beta subunit">
    <location>
        <begin position="1"/>
        <end position="689"/>
    </location>
</feature>
<reference key="1">
    <citation type="journal article" date="2016" name="Front. Microbiol.">
        <title>The complete genome sequence of hyperthermophile Dictyoglomus turgidum DSM 6724 reveals a specialized carbohydrate fermentor.</title>
        <authorList>
            <person name="Brumm P.J."/>
            <person name="Gowda K."/>
            <person name="Robb F.T."/>
            <person name="Mead D.A."/>
        </authorList>
    </citation>
    <scope>NUCLEOTIDE SEQUENCE [LARGE SCALE GENOMIC DNA]</scope>
    <source>
        <strain>DSM 6724 / Z-1310</strain>
    </source>
</reference>
<evidence type="ECO:0000255" key="1">
    <source>
        <dbReference type="HAMAP-Rule" id="MF_00255"/>
    </source>
</evidence>